<name>KDTA_HAEIN</name>
<evidence type="ECO:0000250" key="1"/>
<evidence type="ECO:0000255" key="2"/>
<evidence type="ECO:0000269" key="3">
    <source>
    </source>
</evidence>
<evidence type="ECO:0000269" key="4">
    <source>
    </source>
</evidence>
<evidence type="ECO:0000269" key="5">
    <source>
    </source>
</evidence>
<evidence type="ECO:0000305" key="6"/>
<evidence type="ECO:0000305" key="7">
    <source>
    </source>
</evidence>
<proteinExistence type="evidence at protein level"/>
<organism>
    <name type="scientific">Haemophilus influenzae (strain ATCC 51907 / DSM 11121 / KW20 / Rd)</name>
    <dbReference type="NCBI Taxonomy" id="71421"/>
    <lineage>
        <taxon>Bacteria</taxon>
        <taxon>Pseudomonadati</taxon>
        <taxon>Pseudomonadota</taxon>
        <taxon>Gammaproteobacteria</taxon>
        <taxon>Pasteurellales</taxon>
        <taxon>Pasteurellaceae</taxon>
        <taxon>Haemophilus</taxon>
    </lineage>
</organism>
<comment type="function">
    <text evidence="3 5">Involved in lipopolysaccharide (LPS) biosynthesis. Catalyzes the transfer of a single 3-deoxy-D-manno-octulosonate (Kdo) residue from CMP-Kdo to lipid IV(A), the tetraacyldisaccharide-1,4'-bisphosphate precursor of lipid A. Is strictly monofunctional, i.e. is capable of adding only a single Kdo residue to the acceptor lipid.</text>
</comment>
<comment type="catalytic activity">
    <reaction evidence="3 5">
        <text>lipid IVA (E. coli) + CMP-3-deoxy-beta-D-manno-octulosonate = alpha-Kdo-(2-&gt;6)-lipid IVA (E. coli) + CMP + H(+)</text>
        <dbReference type="Rhea" id="RHEA:28066"/>
        <dbReference type="ChEBI" id="CHEBI:15378"/>
        <dbReference type="ChEBI" id="CHEBI:58603"/>
        <dbReference type="ChEBI" id="CHEBI:60364"/>
        <dbReference type="ChEBI" id="CHEBI:60377"/>
        <dbReference type="ChEBI" id="CHEBI:85987"/>
        <dbReference type="EC" id="2.4.99.12"/>
    </reaction>
</comment>
<comment type="biophysicochemical properties">
    <phDependence>
        <text evidence="5">Optimum pH is 7.5.</text>
    </phDependence>
</comment>
<comment type="pathway">
    <text>Bacterial outer membrane biogenesis; LPS core biosynthesis.</text>
</comment>
<comment type="subcellular location">
    <subcellularLocation>
        <location evidence="7">Cell inner membrane</location>
        <topology evidence="7">Single-pass membrane protein</topology>
        <orientation evidence="7">Cytoplasmic side</orientation>
    </subcellularLocation>
</comment>
<comment type="domain">
    <text evidence="4">The N-terminal half of KdtA, especially the first 30 amino acid residues, is responsible for determining the number of Kdo residues that are transferred to lipid IVA.</text>
</comment>
<comment type="similarity">
    <text evidence="6">Belongs to the glycosyltransferase group 1 family. Glycosyltransferase 30 subfamily.</text>
</comment>
<keyword id="KW-0997">Cell inner membrane</keyword>
<keyword id="KW-1003">Cell membrane</keyword>
<keyword id="KW-0448">Lipopolysaccharide biosynthesis</keyword>
<keyword id="KW-0472">Membrane</keyword>
<keyword id="KW-1185">Reference proteome</keyword>
<keyword id="KW-0735">Signal-anchor</keyword>
<keyword id="KW-0808">Transferase</keyword>
<keyword id="KW-0812">Transmembrane</keyword>
<keyword id="KW-1133">Transmembrane helix</keyword>
<reference key="1">
    <citation type="journal article" date="2000" name="J. Biol. Chem.">
        <title>3-deoxy-D-manno-oct-2-ulosonic acid (Kdo) transferase (WaaA) and Kdo kinase (KdkA) of Haemophilus influenzae are both required to complement a waaA knockout mutation of Escherichia coli.</title>
        <authorList>
            <person name="Brabetz W."/>
            <person name="Mueller-Loennies S."/>
            <person name="Brade H."/>
        </authorList>
    </citation>
    <scope>NUCLEOTIDE SEQUENCE [GENOMIC DNA]</scope>
    <scope>FUNCTION</scope>
    <scope>CATALYTIC ACTIVITY</scope>
    <source>
        <strain>ATCC 51907 / DSM 11121 / KW20 / Rd</strain>
        <strain>I69 / Serotype B</strain>
    </source>
</reference>
<reference key="2">
    <citation type="journal article" date="1995" name="Science">
        <title>Whole-genome random sequencing and assembly of Haemophilus influenzae Rd.</title>
        <authorList>
            <person name="Fleischmann R.D."/>
            <person name="Adams M.D."/>
            <person name="White O."/>
            <person name="Clayton R.A."/>
            <person name="Kirkness E.F."/>
            <person name="Kerlavage A.R."/>
            <person name="Bult C.J."/>
            <person name="Tomb J.-F."/>
            <person name="Dougherty B.A."/>
            <person name="Merrick J.M."/>
            <person name="McKenney K."/>
            <person name="Sutton G.G."/>
            <person name="FitzHugh W."/>
            <person name="Fields C.A."/>
            <person name="Gocayne J.D."/>
            <person name="Scott J.D."/>
            <person name="Shirley R."/>
            <person name="Liu L.-I."/>
            <person name="Glodek A."/>
            <person name="Kelley J.M."/>
            <person name="Weidman J.F."/>
            <person name="Phillips C.A."/>
            <person name="Spriggs T."/>
            <person name="Hedblom E."/>
            <person name="Cotton M.D."/>
            <person name="Utterback T.R."/>
            <person name="Hanna M.C."/>
            <person name="Nguyen D.T."/>
            <person name="Saudek D.M."/>
            <person name="Brandon R.C."/>
            <person name="Fine L.D."/>
            <person name="Fritchman J.L."/>
            <person name="Fuhrmann J.L."/>
            <person name="Geoghagen N.S.M."/>
            <person name="Gnehm C.L."/>
            <person name="McDonald L.A."/>
            <person name="Small K.V."/>
            <person name="Fraser C.M."/>
            <person name="Smith H.O."/>
            <person name="Venter J.C."/>
        </authorList>
    </citation>
    <scope>NUCLEOTIDE SEQUENCE [LARGE SCALE GENOMIC DNA]</scope>
    <source>
        <strain>ATCC 51907 / DSM 11121 / KW20 / Rd</strain>
    </source>
</reference>
<reference key="3">
    <citation type="journal article" date="1997" name="J. Biol. Chem.">
        <title>A mono-functional 3-deoxy-D-manno-octulosonic acid (Kdo) transferase and a Kdo kinase in extracts of Haemophilus influenzae.</title>
        <authorList>
            <person name="White K.A."/>
            <person name="Kaltashov I.A."/>
            <person name="Cotter R.J."/>
            <person name="Raetz C.R."/>
        </authorList>
    </citation>
    <scope>FUNCTION</scope>
    <scope>CATALYTIC ACTIVITY</scope>
    <scope>PH DEPENDENCE</scope>
    <scope>SUBCELLULAR LOCATION</scope>
    <source>
        <strain>722</strain>
    </source>
</reference>
<reference key="4">
    <citation type="journal article" date="2010" name="Biochemistry">
        <title>Interchangeable domains in the Kdo transferases of Escherichia coli and Haemophilus influenzae.</title>
        <authorList>
            <person name="Chung H.S."/>
            <person name="Raetz C.R."/>
        </authorList>
    </citation>
    <scope>DOMAIN</scope>
</reference>
<feature type="chain" id="PRO_0000080289" description="3-deoxy-D-manno-octulosonic acid transferase">
    <location>
        <begin position="1"/>
        <end position="427"/>
    </location>
</feature>
<feature type="transmembrane region" description="Helical; Signal-anchor" evidence="2">
    <location>
        <begin position="4"/>
        <end position="24"/>
    </location>
</feature>
<feature type="active site" description="Proton acceptor" evidence="1">
    <location>
        <position position="62"/>
    </location>
</feature>
<feature type="binding site" evidence="1">
    <location>
        <begin position="270"/>
        <end position="271"/>
    </location>
    <ligand>
        <name>CMP</name>
        <dbReference type="ChEBI" id="CHEBI:60377"/>
    </ligand>
</feature>
<feature type="binding site" evidence="1">
    <location>
        <begin position="311"/>
        <end position="313"/>
    </location>
    <ligand>
        <name>CMP</name>
        <dbReference type="ChEBI" id="CHEBI:60377"/>
    </ligand>
</feature>
<feature type="binding site" evidence="1">
    <location>
        <begin position="337"/>
        <end position="340"/>
    </location>
    <ligand>
        <name>CMP</name>
        <dbReference type="ChEBI" id="CHEBI:60377"/>
    </ligand>
</feature>
<feature type="site" description="Transition state stabilizer" evidence="1">
    <location>
        <position position="132"/>
    </location>
</feature>
<feature type="site" description="Transition state stabilizer" evidence="1">
    <location>
        <position position="210"/>
    </location>
</feature>
<protein>
    <recommendedName>
        <fullName>3-deoxy-D-manno-octulosonic acid transferase</fullName>
        <shortName>Kdo transferase</shortName>
        <ecNumber evidence="3 5">2.4.99.12</ecNumber>
    </recommendedName>
    <alternativeName>
        <fullName>Lipid IV(A) 3-deoxy-D-manno-octulosonic acid transferase</fullName>
    </alternativeName>
    <alternativeName>
        <fullName>Monofunctional Kdo transferase</fullName>
    </alternativeName>
</protein>
<accession>P44806</accession>
<dbReference type="EC" id="2.4.99.12" evidence="3 5"/>
<dbReference type="EMBL" id="AJ277814">
    <property type="protein sequence ID" value="CAC07178.1"/>
    <property type="molecule type" value="Genomic_DNA"/>
</dbReference>
<dbReference type="EMBL" id="AJ277815">
    <property type="protein sequence ID" value="CAC07179.1"/>
    <property type="molecule type" value="Genomic_DNA"/>
</dbReference>
<dbReference type="EMBL" id="L42023">
    <property type="protein sequence ID" value="AAC22311.1"/>
    <property type="molecule type" value="Genomic_DNA"/>
</dbReference>
<dbReference type="PIR" id="F64084">
    <property type="entry name" value="F64084"/>
</dbReference>
<dbReference type="RefSeq" id="NP_438812.1">
    <property type="nucleotide sequence ID" value="NC_000907.1"/>
</dbReference>
<dbReference type="SMR" id="P44806"/>
<dbReference type="STRING" id="71421.HI_0652"/>
<dbReference type="CAZy" id="GT30">
    <property type="family name" value="Glycosyltransferase Family 30"/>
</dbReference>
<dbReference type="EnsemblBacteria" id="AAC22311">
    <property type="protein sequence ID" value="AAC22311"/>
    <property type="gene ID" value="HI_0652"/>
</dbReference>
<dbReference type="KEGG" id="hin:HI_0652"/>
<dbReference type="PATRIC" id="fig|71421.8.peg.681"/>
<dbReference type="eggNOG" id="COG1519">
    <property type="taxonomic scope" value="Bacteria"/>
</dbReference>
<dbReference type="HOGENOM" id="CLU_036146_2_0_6"/>
<dbReference type="OrthoDB" id="9789797at2"/>
<dbReference type="PhylomeDB" id="P44806"/>
<dbReference type="BioCyc" id="HINF71421:G1GJ1-687-MONOMER"/>
<dbReference type="BRENDA" id="2.4.99.12">
    <property type="organism ID" value="2529"/>
</dbReference>
<dbReference type="UniPathway" id="UPA00958"/>
<dbReference type="Proteomes" id="UP000000579">
    <property type="component" value="Chromosome"/>
</dbReference>
<dbReference type="GO" id="GO:0005886">
    <property type="term" value="C:plasma membrane"/>
    <property type="evidence" value="ECO:0000318"/>
    <property type="project" value="GO_Central"/>
</dbReference>
<dbReference type="GO" id="GO:0043842">
    <property type="term" value="F:Kdo transferase activity"/>
    <property type="evidence" value="ECO:0007669"/>
    <property type="project" value="UniProtKB-EC"/>
</dbReference>
<dbReference type="GO" id="GO:0016740">
    <property type="term" value="F:transferase activity"/>
    <property type="evidence" value="ECO:0000318"/>
    <property type="project" value="GO_Central"/>
</dbReference>
<dbReference type="GO" id="GO:0009245">
    <property type="term" value="P:lipid A biosynthetic process"/>
    <property type="evidence" value="ECO:0000318"/>
    <property type="project" value="GO_Central"/>
</dbReference>
<dbReference type="GO" id="GO:0009244">
    <property type="term" value="P:lipopolysaccharide core region biosynthetic process"/>
    <property type="evidence" value="ECO:0007669"/>
    <property type="project" value="UniProtKB-UniPathway"/>
</dbReference>
<dbReference type="FunFam" id="3.40.50.11720:FF:000001">
    <property type="entry name" value="3-deoxy-D-manno-octulosonic acid transferase"/>
    <property type="match status" value="1"/>
</dbReference>
<dbReference type="FunFam" id="3.40.50.2000:FF:000032">
    <property type="entry name" value="3-deoxy-D-manno-octulosonic acid transferase"/>
    <property type="match status" value="1"/>
</dbReference>
<dbReference type="Gene3D" id="3.40.50.11720">
    <property type="entry name" value="3-Deoxy-D-manno-octulosonic-acid transferase, N-terminal domain"/>
    <property type="match status" value="1"/>
</dbReference>
<dbReference type="Gene3D" id="3.40.50.2000">
    <property type="entry name" value="Glycogen Phosphorylase B"/>
    <property type="match status" value="1"/>
</dbReference>
<dbReference type="InterPro" id="IPR001296">
    <property type="entry name" value="Glyco_trans_1"/>
</dbReference>
<dbReference type="InterPro" id="IPR007507">
    <property type="entry name" value="Glycos_transf_N"/>
</dbReference>
<dbReference type="InterPro" id="IPR038107">
    <property type="entry name" value="Glycos_transf_N_sf"/>
</dbReference>
<dbReference type="InterPro" id="IPR039901">
    <property type="entry name" value="Kdotransferase"/>
</dbReference>
<dbReference type="NCBIfam" id="NF004388">
    <property type="entry name" value="PRK05749.1-4"/>
    <property type="match status" value="1"/>
</dbReference>
<dbReference type="PANTHER" id="PTHR42755:SF1">
    <property type="entry name" value="3-DEOXY-D-MANNO-OCTULOSONIC ACID TRANSFERASE, MITOCHONDRIAL-RELATED"/>
    <property type="match status" value="1"/>
</dbReference>
<dbReference type="PANTHER" id="PTHR42755">
    <property type="entry name" value="3-DEOXY-MANNO-OCTULOSONATE CYTIDYLYLTRANSFERASE"/>
    <property type="match status" value="1"/>
</dbReference>
<dbReference type="Pfam" id="PF00534">
    <property type="entry name" value="Glycos_transf_1"/>
    <property type="match status" value="1"/>
</dbReference>
<dbReference type="Pfam" id="PF04413">
    <property type="entry name" value="Glycos_transf_N"/>
    <property type="match status" value="1"/>
</dbReference>
<dbReference type="SUPFAM" id="SSF53756">
    <property type="entry name" value="UDP-Glycosyltransferase/glycogen phosphorylase"/>
    <property type="match status" value="1"/>
</dbReference>
<sequence>MWRFFYTSLLLICQPLILCFIGLLSVKSPRYRQRLAERYGFYGNASCPPPQGIFIHAASVGEVIAATPLVRQLQQDYPHLSITFTTFTPTGSERVKATFGDSVFHYYLPLDLPFSIHRFINFVQPKLCIVMETELWPNLIHQLFLRNIPFVIANARLSARSAHRYGKIKAHLQTMWSQISLIAAQDNISGKRYATLGYPKEKLNITGNIKYDLNTNDELLRKIDSLRTLWKQDRPIWIAASTHNGEDEIILKSHRALLAKYPNLLLLLVPRHPERFNVVADLLKKEKFQFIRRSTNELPNENTQVILGDSMGELMLMYGISDIAFVGGSLVKHGGHNPLEPLAFKMPVITGKHTFNFPEIFRMLVEVQGVLEVNSTADALERAVEALLNSKESRERLGNAGYEVLMENRGALQRLLDLLKPYLERNV</sequence>
<gene>
    <name type="primary">waaA</name>
    <name type="synonym">kdtA</name>
    <name type="ordered locus">HI_0652</name>
</gene>